<keyword id="KW-0004">4Fe-4S</keyword>
<keyword id="KW-0408">Iron</keyword>
<keyword id="KW-0411">Iron-sulfur</keyword>
<keyword id="KW-0479">Metal-binding</keyword>
<keyword id="KW-0496">Mitochondrion</keyword>
<keyword id="KW-0949">S-adenosyl-L-methionine</keyword>
<keyword id="KW-0808">Transferase</keyword>
<feature type="chain" id="PRO_0000398857" description="Lipoyl synthase, mitochondrial">
    <location>
        <begin position="1"/>
        <end position="393"/>
    </location>
</feature>
<feature type="domain" description="Radical SAM core" evidence="2">
    <location>
        <begin position="131"/>
        <end position="351"/>
    </location>
</feature>
<feature type="binding site" evidence="1">
    <location>
        <position position="115"/>
    </location>
    <ligand>
        <name>[4Fe-4S] cluster</name>
        <dbReference type="ChEBI" id="CHEBI:49883"/>
        <label>1</label>
    </ligand>
</feature>
<feature type="binding site" evidence="1">
    <location>
        <position position="120"/>
    </location>
    <ligand>
        <name>[4Fe-4S] cluster</name>
        <dbReference type="ChEBI" id="CHEBI:49883"/>
        <label>1</label>
    </ligand>
</feature>
<feature type="binding site" evidence="1">
    <location>
        <position position="126"/>
    </location>
    <ligand>
        <name>[4Fe-4S] cluster</name>
        <dbReference type="ChEBI" id="CHEBI:49883"/>
        <label>1</label>
    </ligand>
</feature>
<feature type="binding site" evidence="1">
    <location>
        <position position="146"/>
    </location>
    <ligand>
        <name>[4Fe-4S] cluster</name>
        <dbReference type="ChEBI" id="CHEBI:49883"/>
        <label>2</label>
        <note>4Fe-4S-S-AdoMet</note>
    </ligand>
</feature>
<feature type="binding site" evidence="1">
    <location>
        <position position="150"/>
    </location>
    <ligand>
        <name>[4Fe-4S] cluster</name>
        <dbReference type="ChEBI" id="CHEBI:49883"/>
        <label>2</label>
        <note>4Fe-4S-S-AdoMet</note>
    </ligand>
</feature>
<feature type="binding site" evidence="1">
    <location>
        <position position="153"/>
    </location>
    <ligand>
        <name>[4Fe-4S] cluster</name>
        <dbReference type="ChEBI" id="CHEBI:49883"/>
        <label>2</label>
        <note>4Fe-4S-S-AdoMet</note>
    </ligand>
</feature>
<feature type="binding site" evidence="1">
    <location>
        <position position="362"/>
    </location>
    <ligand>
        <name>[4Fe-4S] cluster</name>
        <dbReference type="ChEBI" id="CHEBI:49883"/>
        <label>1</label>
    </ligand>
</feature>
<name>LIAS_VITVI</name>
<comment type="function">
    <text evidence="1">Catalyzes the radical-mediated insertion of two sulfur atoms into the C-6 and C-8 positions of the octanoyl moiety bound to the lipoyl domains of lipoate-dependent enzymes, thereby converting the octanoylated domains into lipoylated derivatives.</text>
</comment>
<comment type="catalytic activity">
    <reaction evidence="1">
        <text>[[Fe-S] cluster scaffold protein carrying a second [4Fe-4S](2+) cluster] + N(6)-octanoyl-L-lysyl-[protein] + 2 oxidized [2Fe-2S]-[ferredoxin] + 2 S-adenosyl-L-methionine + 4 H(+) = [[Fe-S] cluster scaffold protein] + N(6)-[(R)-dihydrolipoyl]-L-lysyl-[protein] + 4 Fe(3+) + 2 hydrogen sulfide + 2 5'-deoxyadenosine + 2 L-methionine + 2 reduced [2Fe-2S]-[ferredoxin]</text>
        <dbReference type="Rhea" id="RHEA:16585"/>
        <dbReference type="Rhea" id="RHEA-COMP:9928"/>
        <dbReference type="Rhea" id="RHEA-COMP:10000"/>
        <dbReference type="Rhea" id="RHEA-COMP:10001"/>
        <dbReference type="Rhea" id="RHEA-COMP:10475"/>
        <dbReference type="Rhea" id="RHEA-COMP:14568"/>
        <dbReference type="Rhea" id="RHEA-COMP:14569"/>
        <dbReference type="ChEBI" id="CHEBI:15378"/>
        <dbReference type="ChEBI" id="CHEBI:17319"/>
        <dbReference type="ChEBI" id="CHEBI:29034"/>
        <dbReference type="ChEBI" id="CHEBI:29919"/>
        <dbReference type="ChEBI" id="CHEBI:33722"/>
        <dbReference type="ChEBI" id="CHEBI:33737"/>
        <dbReference type="ChEBI" id="CHEBI:33738"/>
        <dbReference type="ChEBI" id="CHEBI:57844"/>
        <dbReference type="ChEBI" id="CHEBI:59789"/>
        <dbReference type="ChEBI" id="CHEBI:78809"/>
        <dbReference type="ChEBI" id="CHEBI:83100"/>
        <dbReference type="EC" id="2.8.1.8"/>
    </reaction>
</comment>
<comment type="cofactor">
    <cofactor evidence="1">
        <name>[4Fe-4S] cluster</name>
        <dbReference type="ChEBI" id="CHEBI:49883"/>
    </cofactor>
    <text evidence="1">Binds 2 [4Fe-4S] clusters per subunit. One cluster is coordinated with 3 cysteines and an exchangeable S-adenosyl-L-methionine.</text>
</comment>
<comment type="pathway">
    <text evidence="1">Protein modification; protein lipoylation via endogenous pathway; protein N(6)-(lipoyl)lysine from octanoyl-[acyl-carrier-protein]: step 2/2.</text>
</comment>
<comment type="subcellular location">
    <subcellularLocation>
        <location evidence="1">Mitochondrion</location>
    </subcellularLocation>
</comment>
<comment type="miscellaneous">
    <text evidence="1">This protein may be expected to contain an N-terminal transit peptide but none has been predicted.</text>
</comment>
<comment type="similarity">
    <text evidence="1">Belongs to the radical SAM superfamily. Lipoyl synthase family.</text>
</comment>
<evidence type="ECO:0000255" key="1">
    <source>
        <dbReference type="HAMAP-Rule" id="MF_03128"/>
    </source>
</evidence>
<evidence type="ECO:0000255" key="2">
    <source>
        <dbReference type="PROSITE-ProRule" id="PRU01266"/>
    </source>
</evidence>
<sequence length="393" mass="43477">MYTRLSSLALRHHRHNHNNSVLLLSSLISLRHCSSPPTNPEPPQTLASLRHRLAVESPSLSDFVRLQTSDDYSVEVGTKKKPLSKPKWMKESIPGGAKYTQIKKKLRQLNLHTVCEEARCPNMGECWSGGETGTATATIMILGDTCTRGCRFCNVKTSRTPPPPDPDEPSKVAEAIASWGLDYVVITSVDRDDLPDQGSGHFAETVQKLKILKPNMLIEALVPDFRGDPGCVEKVSKSGLDVFAHNIETVEELQSAVRDHRANFKQSLEVLKLAKEYADAGTLTKTSIMLGCGETPDQVVRTMEKVRAAGVDVMTFGQYMRPSKRHMPVSEYITPEAFEKYRILGMDMGFRYVASGPMVRSSYKAGEFYIKSMIDADRAMSWASSSPSPLPAA</sequence>
<accession>A5CB81</accession>
<reference key="1">
    <citation type="journal article" date="2007" name="PLoS ONE">
        <title>A high quality draft consensus sequence of the genome of a heterozygous grapevine variety.</title>
        <authorList>
            <person name="Velasco R."/>
            <person name="Zharkikh A."/>
            <person name="Troggio M."/>
            <person name="Cartwright D.A."/>
            <person name="Cestaro A."/>
            <person name="Pruss D."/>
            <person name="Pindo M."/>
            <person name="FitzGerald L.M."/>
            <person name="Vezzulli S."/>
            <person name="Reid J."/>
            <person name="Malacarne G."/>
            <person name="Iliev D."/>
            <person name="Coppola G."/>
            <person name="Wardell B."/>
            <person name="Micheletti D."/>
            <person name="Macalma T."/>
            <person name="Facci M."/>
            <person name="Mitchell J.T."/>
            <person name="Perazzolli M."/>
            <person name="Eldredge G."/>
            <person name="Gatto P."/>
            <person name="Oyzerski R."/>
            <person name="Moretto M."/>
            <person name="Gutin N."/>
            <person name="Stefanini M."/>
            <person name="Chen Y."/>
            <person name="Segala C."/>
            <person name="Davenport C."/>
            <person name="Dematte L."/>
            <person name="Mraz A."/>
            <person name="Battilana J."/>
            <person name="Stormo K."/>
            <person name="Costa F."/>
            <person name="Tao Q."/>
            <person name="Si-Ammour A."/>
            <person name="Harkins T."/>
            <person name="Lackey A."/>
            <person name="Perbost C."/>
            <person name="Taillon B."/>
            <person name="Stella A."/>
            <person name="Solovyev V."/>
            <person name="Fawcett J.A."/>
            <person name="Sterck L."/>
            <person name="Vandepoele K."/>
            <person name="Grando S.M."/>
            <person name="Toppo S."/>
            <person name="Moser C."/>
            <person name="Lanchbury J."/>
            <person name="Bogden R."/>
            <person name="Skolnick M."/>
            <person name="Sgaramella V."/>
            <person name="Bhatnagar S.K."/>
            <person name="Fontana P."/>
            <person name="Gutin A."/>
            <person name="Van de Peer Y."/>
            <person name="Salamini F."/>
            <person name="Viola R."/>
        </authorList>
    </citation>
    <scope>NUCLEOTIDE SEQUENCE [LARGE SCALE GENOMIC DNA]</scope>
    <source>
        <strain>cv. Pinot noir</strain>
    </source>
</reference>
<organism>
    <name type="scientific">Vitis vinifera</name>
    <name type="common">Grape</name>
    <dbReference type="NCBI Taxonomy" id="29760"/>
    <lineage>
        <taxon>Eukaryota</taxon>
        <taxon>Viridiplantae</taxon>
        <taxon>Streptophyta</taxon>
        <taxon>Embryophyta</taxon>
        <taxon>Tracheophyta</taxon>
        <taxon>Spermatophyta</taxon>
        <taxon>Magnoliopsida</taxon>
        <taxon>eudicotyledons</taxon>
        <taxon>Gunneridae</taxon>
        <taxon>Pentapetalae</taxon>
        <taxon>rosids</taxon>
        <taxon>Vitales</taxon>
        <taxon>Vitaceae</taxon>
        <taxon>Viteae</taxon>
        <taxon>Vitis</taxon>
    </lineage>
</organism>
<dbReference type="EC" id="2.8.1.8" evidence="1"/>
<dbReference type="EMBL" id="AM488835">
    <property type="protein sequence ID" value="CAN73265.1"/>
    <property type="molecule type" value="Genomic_DNA"/>
</dbReference>
<dbReference type="RefSeq" id="XP_002266132.2">
    <property type="nucleotide sequence ID" value="XM_002266096.4"/>
</dbReference>
<dbReference type="SMR" id="A5CB81"/>
<dbReference type="PaxDb" id="29760-VIT_00s0445g00020.t01"/>
<dbReference type="eggNOG" id="KOG2672">
    <property type="taxonomic scope" value="Eukaryota"/>
</dbReference>
<dbReference type="UniPathway" id="UPA00538">
    <property type="reaction ID" value="UER00593"/>
</dbReference>
<dbReference type="ExpressionAtlas" id="A5CB81">
    <property type="expression patterns" value="baseline and differential"/>
</dbReference>
<dbReference type="GO" id="GO:0005739">
    <property type="term" value="C:mitochondrion"/>
    <property type="evidence" value="ECO:0007669"/>
    <property type="project" value="UniProtKB-SubCell"/>
</dbReference>
<dbReference type="GO" id="GO:0051539">
    <property type="term" value="F:4 iron, 4 sulfur cluster binding"/>
    <property type="evidence" value="ECO:0007669"/>
    <property type="project" value="UniProtKB-UniRule"/>
</dbReference>
<dbReference type="GO" id="GO:0016992">
    <property type="term" value="F:lipoate synthase activity"/>
    <property type="evidence" value="ECO:0007669"/>
    <property type="project" value="UniProtKB-UniRule"/>
</dbReference>
<dbReference type="GO" id="GO:0046872">
    <property type="term" value="F:metal ion binding"/>
    <property type="evidence" value="ECO:0007669"/>
    <property type="project" value="UniProtKB-KW"/>
</dbReference>
<dbReference type="CDD" id="cd01335">
    <property type="entry name" value="Radical_SAM"/>
    <property type="match status" value="1"/>
</dbReference>
<dbReference type="FunFam" id="3.20.20.70:FF:000125">
    <property type="entry name" value="Lipoyl synthase, mitochondrial"/>
    <property type="match status" value="1"/>
</dbReference>
<dbReference type="Gene3D" id="3.20.20.70">
    <property type="entry name" value="Aldolase class I"/>
    <property type="match status" value="1"/>
</dbReference>
<dbReference type="HAMAP" id="MF_00206">
    <property type="entry name" value="Lipoyl_synth"/>
    <property type="match status" value="1"/>
</dbReference>
<dbReference type="HAMAP" id="MF_03128">
    <property type="entry name" value="Lipoyl_synth_plantM"/>
    <property type="match status" value="1"/>
</dbReference>
<dbReference type="InterPro" id="IPR013785">
    <property type="entry name" value="Aldolase_TIM"/>
</dbReference>
<dbReference type="InterPro" id="IPR006638">
    <property type="entry name" value="Elp3/MiaA/NifB-like_rSAM"/>
</dbReference>
<dbReference type="InterPro" id="IPR031691">
    <property type="entry name" value="LIAS_N"/>
</dbReference>
<dbReference type="InterPro" id="IPR003698">
    <property type="entry name" value="Lipoyl_synth"/>
</dbReference>
<dbReference type="InterPro" id="IPR027527">
    <property type="entry name" value="Lipoyl_synth_mt"/>
</dbReference>
<dbReference type="InterPro" id="IPR007197">
    <property type="entry name" value="rSAM"/>
</dbReference>
<dbReference type="NCBIfam" id="TIGR00510">
    <property type="entry name" value="lipA"/>
    <property type="match status" value="1"/>
</dbReference>
<dbReference type="NCBIfam" id="NF004019">
    <property type="entry name" value="PRK05481.1"/>
    <property type="match status" value="1"/>
</dbReference>
<dbReference type="NCBIfam" id="NF009544">
    <property type="entry name" value="PRK12928.1"/>
    <property type="match status" value="1"/>
</dbReference>
<dbReference type="PANTHER" id="PTHR10949">
    <property type="entry name" value="LIPOYL SYNTHASE"/>
    <property type="match status" value="1"/>
</dbReference>
<dbReference type="PANTHER" id="PTHR10949:SF0">
    <property type="entry name" value="LIPOYL SYNTHASE, MITOCHONDRIAL"/>
    <property type="match status" value="1"/>
</dbReference>
<dbReference type="Pfam" id="PF16881">
    <property type="entry name" value="LIAS_N"/>
    <property type="match status" value="1"/>
</dbReference>
<dbReference type="Pfam" id="PF04055">
    <property type="entry name" value="Radical_SAM"/>
    <property type="match status" value="1"/>
</dbReference>
<dbReference type="SFLD" id="SFLDF00271">
    <property type="entry name" value="lipoyl_synthase"/>
    <property type="match status" value="1"/>
</dbReference>
<dbReference type="SFLD" id="SFLDG01058">
    <property type="entry name" value="lipoyl_synthase_like"/>
    <property type="match status" value="1"/>
</dbReference>
<dbReference type="SMART" id="SM00729">
    <property type="entry name" value="Elp3"/>
    <property type="match status" value="1"/>
</dbReference>
<dbReference type="SUPFAM" id="SSF102114">
    <property type="entry name" value="Radical SAM enzymes"/>
    <property type="match status" value="1"/>
</dbReference>
<dbReference type="PROSITE" id="PS51918">
    <property type="entry name" value="RADICAL_SAM"/>
    <property type="match status" value="1"/>
</dbReference>
<gene>
    <name evidence="1" type="primary">LIP1</name>
    <name type="ORF">VITISV_021769</name>
</gene>
<proteinExistence type="inferred from homology"/>
<protein>
    <recommendedName>
        <fullName evidence="1">Lipoyl synthase, mitochondrial</fullName>
        <ecNumber evidence="1">2.8.1.8</ecNumber>
    </recommendedName>
    <alternativeName>
        <fullName evidence="1">Lipoate synthase</fullName>
        <shortName evidence="1">LS</shortName>
        <shortName evidence="1">Lip-syn</shortName>
    </alternativeName>
    <alternativeName>
        <fullName evidence="1">Lipoic acid synthase</fullName>
    </alternativeName>
</protein>